<sequence length="102" mass="11105">DNCESNADCHEGLECSNRKCLISFNSDETCSTGWDCVPGVWCRTHGSEPGKCDEDHRCPSDGVCTNPGTECDEDNICGYKEGEPCYGPCRKGLSCRQGTCLQ</sequence>
<evidence type="ECO:0000250" key="1"/>
<accession>P0DKP1</accession>
<proteinExistence type="evidence at transcript level"/>
<name>TU55_LOPAC</name>
<keyword id="KW-1015">Disulfide bond</keyword>
<keyword id="KW-0872">Ion channel impairing toxin</keyword>
<keyword id="KW-0528">Neurotoxin</keyword>
<keyword id="KW-0964">Secreted</keyword>
<keyword id="KW-0800">Toxin</keyword>
<organism>
    <name type="scientific">Lophiotoma acuta</name>
    <name type="common">Marbled turris</name>
    <name type="synonym">Pleurotoma acuta</name>
    <dbReference type="NCBI Taxonomy" id="439593"/>
    <lineage>
        <taxon>Eukaryota</taxon>
        <taxon>Metazoa</taxon>
        <taxon>Spiralia</taxon>
        <taxon>Lophotrochozoa</taxon>
        <taxon>Mollusca</taxon>
        <taxon>Gastropoda</taxon>
        <taxon>Caenogastropoda</taxon>
        <taxon>Neogastropoda</taxon>
        <taxon>Conoidea</taxon>
        <taxon>Turridae</taxon>
        <taxon>Lophiotoma</taxon>
    </lineage>
</organism>
<reference key="1">
    <citation type="journal article" date="2006" name="J. Mol. Evol.">
        <title>Genes expressed in a turrid venom duct: divergence and similarity to conotoxins.</title>
        <authorList>
            <person name="Watkins M."/>
            <person name="Hillyard D.R."/>
            <person name="Olivera B.M."/>
        </authorList>
    </citation>
    <scope>NUCLEOTIDE SEQUENCE [MRNA]</scope>
    <source>
        <tissue>Venom duct</tissue>
    </source>
</reference>
<comment type="function">
    <text evidence="1">Acts as a neurotoxin by inhibiting an ion channel.</text>
</comment>
<comment type="subcellular location">
    <subcellularLocation>
        <location evidence="1">Secreted</location>
    </subcellularLocation>
</comment>
<comment type="tissue specificity">
    <text>Expressed by the venom duct.</text>
</comment>
<comment type="domain">
    <text>The cysteine framework is C-C-C-C-C-C-C-C-C-C-C-C-C-C-C-C.</text>
</comment>
<comment type="PTM">
    <text evidence="1">Contains 8 disulfide bonds.</text>
</comment>
<feature type="chain" id="PRO_0000419857" description="Turripeptide OL55-like">
    <location>
        <begin position="1"/>
        <end position="102"/>
    </location>
</feature>
<dbReference type="GO" id="GO:0005576">
    <property type="term" value="C:extracellular region"/>
    <property type="evidence" value="ECO:0007669"/>
    <property type="project" value="UniProtKB-SubCell"/>
</dbReference>
<dbReference type="GO" id="GO:0099106">
    <property type="term" value="F:ion channel regulator activity"/>
    <property type="evidence" value="ECO:0007669"/>
    <property type="project" value="UniProtKB-KW"/>
</dbReference>
<dbReference type="GO" id="GO:0090729">
    <property type="term" value="F:toxin activity"/>
    <property type="evidence" value="ECO:0007669"/>
    <property type="project" value="UniProtKB-KW"/>
</dbReference>
<protein>
    <recommendedName>
        <fullName>Turripeptide OL55-like</fullName>
    </recommendedName>
</protein>